<keyword id="KW-1185">Reference proteome</keyword>
<keyword id="KW-0687">Ribonucleoprotein</keyword>
<keyword id="KW-0689">Ribosomal protein</keyword>
<evidence type="ECO:0000255" key="1">
    <source>
        <dbReference type="HAMAP-Rule" id="MF_00373"/>
    </source>
</evidence>
<evidence type="ECO:0000305" key="2"/>
<feature type="chain" id="PRO_1000007320" description="Large ribosomal subunit protein bL28">
    <location>
        <begin position="1"/>
        <end position="78"/>
    </location>
</feature>
<sequence length="78" mass="9111">MSRVCQVTGKRPMVGNNVSHANNKTRRRFLPNLHNHRFWVESENRFVRLRVSTKGMRIIDKLGIDKVLVDLRAQGQKV</sequence>
<comment type="similarity">
    <text evidence="1">Belongs to the bacterial ribosomal protein bL28 family.</text>
</comment>
<reference key="1">
    <citation type="journal article" date="2010" name="Appl. Environ. Microbiol.">
        <title>The genome sequence of Psychrobacter arcticus 273-4, a psychroactive Siberian permafrost bacterium, reveals mechanisms for adaptation to low-temperature growth.</title>
        <authorList>
            <person name="Ayala-del-Rio H.L."/>
            <person name="Chain P.S."/>
            <person name="Grzymski J.J."/>
            <person name="Ponder M.A."/>
            <person name="Ivanova N."/>
            <person name="Bergholz P.W."/>
            <person name="Di Bartolo G."/>
            <person name="Hauser L."/>
            <person name="Land M."/>
            <person name="Bakermans C."/>
            <person name="Rodrigues D."/>
            <person name="Klappenbach J."/>
            <person name="Zarka D."/>
            <person name="Larimer F."/>
            <person name="Richardson P."/>
            <person name="Murray A."/>
            <person name="Thomashow M."/>
            <person name="Tiedje J.M."/>
        </authorList>
    </citation>
    <scope>NUCLEOTIDE SEQUENCE [LARGE SCALE GENOMIC DNA]</scope>
    <source>
        <strain>DSM 17307 / VKM B-2377 / 273-4</strain>
    </source>
</reference>
<gene>
    <name evidence="1" type="primary">rpmB</name>
    <name type="ordered locus">Psyc_1710</name>
</gene>
<accession>Q4FR00</accession>
<dbReference type="EMBL" id="CP000082">
    <property type="protein sequence ID" value="AAZ19558.1"/>
    <property type="molecule type" value="Genomic_DNA"/>
</dbReference>
<dbReference type="RefSeq" id="WP_011280972.1">
    <property type="nucleotide sequence ID" value="NC_007204.1"/>
</dbReference>
<dbReference type="SMR" id="Q4FR00"/>
<dbReference type="STRING" id="259536.Psyc_1710"/>
<dbReference type="KEGG" id="par:Psyc_1710"/>
<dbReference type="eggNOG" id="COG0227">
    <property type="taxonomic scope" value="Bacteria"/>
</dbReference>
<dbReference type="HOGENOM" id="CLU_064548_3_1_6"/>
<dbReference type="OrthoDB" id="9805609at2"/>
<dbReference type="Proteomes" id="UP000000546">
    <property type="component" value="Chromosome"/>
</dbReference>
<dbReference type="GO" id="GO:0022625">
    <property type="term" value="C:cytosolic large ribosomal subunit"/>
    <property type="evidence" value="ECO:0007669"/>
    <property type="project" value="TreeGrafter"/>
</dbReference>
<dbReference type="GO" id="GO:0003735">
    <property type="term" value="F:structural constituent of ribosome"/>
    <property type="evidence" value="ECO:0007669"/>
    <property type="project" value="InterPro"/>
</dbReference>
<dbReference type="GO" id="GO:0006412">
    <property type="term" value="P:translation"/>
    <property type="evidence" value="ECO:0007669"/>
    <property type="project" value="UniProtKB-UniRule"/>
</dbReference>
<dbReference type="FunFam" id="2.30.170.40:FF:000001">
    <property type="entry name" value="50S ribosomal protein L28"/>
    <property type="match status" value="1"/>
</dbReference>
<dbReference type="Gene3D" id="2.30.170.40">
    <property type="entry name" value="Ribosomal protein L28/L24"/>
    <property type="match status" value="1"/>
</dbReference>
<dbReference type="HAMAP" id="MF_00373">
    <property type="entry name" value="Ribosomal_bL28"/>
    <property type="match status" value="1"/>
</dbReference>
<dbReference type="InterPro" id="IPR026569">
    <property type="entry name" value="Ribosomal_bL28"/>
</dbReference>
<dbReference type="InterPro" id="IPR034704">
    <property type="entry name" value="Ribosomal_bL28/bL31-like_sf"/>
</dbReference>
<dbReference type="InterPro" id="IPR001383">
    <property type="entry name" value="Ribosomal_bL28_bact-type"/>
</dbReference>
<dbReference type="InterPro" id="IPR037147">
    <property type="entry name" value="Ribosomal_bL28_sf"/>
</dbReference>
<dbReference type="NCBIfam" id="TIGR00009">
    <property type="entry name" value="L28"/>
    <property type="match status" value="1"/>
</dbReference>
<dbReference type="PANTHER" id="PTHR13528">
    <property type="entry name" value="39S RIBOSOMAL PROTEIN L28, MITOCHONDRIAL"/>
    <property type="match status" value="1"/>
</dbReference>
<dbReference type="PANTHER" id="PTHR13528:SF2">
    <property type="entry name" value="LARGE RIBOSOMAL SUBUNIT PROTEIN BL28M"/>
    <property type="match status" value="1"/>
</dbReference>
<dbReference type="Pfam" id="PF00830">
    <property type="entry name" value="Ribosomal_L28"/>
    <property type="match status" value="1"/>
</dbReference>
<dbReference type="SUPFAM" id="SSF143800">
    <property type="entry name" value="L28p-like"/>
    <property type="match status" value="1"/>
</dbReference>
<organism>
    <name type="scientific">Psychrobacter arcticus (strain DSM 17307 / VKM B-2377 / 273-4)</name>
    <dbReference type="NCBI Taxonomy" id="259536"/>
    <lineage>
        <taxon>Bacteria</taxon>
        <taxon>Pseudomonadati</taxon>
        <taxon>Pseudomonadota</taxon>
        <taxon>Gammaproteobacteria</taxon>
        <taxon>Moraxellales</taxon>
        <taxon>Moraxellaceae</taxon>
        <taxon>Psychrobacter</taxon>
    </lineage>
</organism>
<proteinExistence type="inferred from homology"/>
<name>RL28_PSYA2</name>
<protein>
    <recommendedName>
        <fullName evidence="1">Large ribosomal subunit protein bL28</fullName>
    </recommendedName>
    <alternativeName>
        <fullName evidence="2">50S ribosomal protein L28</fullName>
    </alternativeName>
</protein>